<sequence length="326" mass="34967">MLTLARQQQRQNIRWLLCLSVLMLLALLLSLCAGEQWISPGDWFTPRGELFVWQIRLPRTLAVLLVGAALAISGAVMQALFENPLAEPGLLGVSNGAGVGLIAAVLLGQGQLPNWALGLCAIAGALIITLILLRFARRHLSTSRLLLAGVALGIICSALMTWAIYFSTSVDLRQLMYWMMGGFGGVDWRQSWLMLALIPVLLWICCQSRPMNMLALGEISARQLGLPMWFWRNVLVAATGWMVGVSVALAGAIGFIGLVIPHILRLCGLTDHRVLLPGCALAGASALLLADIVARLALAAAELPIGVVTATLGAPVFIWLLLKAGR</sequence>
<dbReference type="EMBL" id="AE005674">
    <property type="protein sequence ID" value="AAN43110.1"/>
    <property type="molecule type" value="Genomic_DNA"/>
</dbReference>
<dbReference type="EMBL" id="AE014073">
    <property type="protein sequence ID" value="AAP17000.1"/>
    <property type="molecule type" value="Genomic_DNA"/>
</dbReference>
<dbReference type="RefSeq" id="NP_707403.1">
    <property type="nucleotide sequence ID" value="NC_004337.2"/>
</dbReference>
<dbReference type="RefSeq" id="WP_000956532.1">
    <property type="nucleotide sequence ID" value="NZ_WPGW01000051.1"/>
</dbReference>
<dbReference type="SMR" id="Q7C1M5"/>
<dbReference type="STRING" id="198214.SF1520"/>
<dbReference type="PaxDb" id="198214-SF1520"/>
<dbReference type="GeneID" id="1024714"/>
<dbReference type="KEGG" id="sfl:SF1520"/>
<dbReference type="KEGG" id="sfx:S1637"/>
<dbReference type="PATRIC" id="fig|198214.7.peg.1795"/>
<dbReference type="HOGENOM" id="CLU_013016_0_3_6"/>
<dbReference type="Proteomes" id="UP000001006">
    <property type="component" value="Chromosome"/>
</dbReference>
<dbReference type="Proteomes" id="UP000002673">
    <property type="component" value="Chromosome"/>
</dbReference>
<dbReference type="GO" id="GO:0005886">
    <property type="term" value="C:plasma membrane"/>
    <property type="evidence" value="ECO:0007669"/>
    <property type="project" value="UniProtKB-SubCell"/>
</dbReference>
<dbReference type="GO" id="GO:0090482">
    <property type="term" value="F:vitamin transmembrane transporter activity"/>
    <property type="evidence" value="ECO:0007669"/>
    <property type="project" value="UniProtKB-UniRule"/>
</dbReference>
<dbReference type="GO" id="GO:0015889">
    <property type="term" value="P:cobalamin transport"/>
    <property type="evidence" value="ECO:0007669"/>
    <property type="project" value="UniProtKB-UniRule"/>
</dbReference>
<dbReference type="CDD" id="cd06550">
    <property type="entry name" value="TM_ABC_iron-siderophores_like"/>
    <property type="match status" value="1"/>
</dbReference>
<dbReference type="FunFam" id="1.10.3470.10:FF:000001">
    <property type="entry name" value="Vitamin B12 ABC transporter permease BtuC"/>
    <property type="match status" value="1"/>
</dbReference>
<dbReference type="Gene3D" id="1.10.3470.10">
    <property type="entry name" value="ABC transporter involved in vitamin B12 uptake, BtuC"/>
    <property type="match status" value="1"/>
</dbReference>
<dbReference type="HAMAP" id="MF_01004">
    <property type="entry name" value="BtuC"/>
    <property type="match status" value="1"/>
</dbReference>
<dbReference type="InterPro" id="IPR037294">
    <property type="entry name" value="ABC_BtuC-like"/>
</dbReference>
<dbReference type="InterPro" id="IPR023691">
    <property type="entry name" value="ABC_transptr_BtuC"/>
</dbReference>
<dbReference type="InterPro" id="IPR000522">
    <property type="entry name" value="ABC_transptr_permease_BtuC"/>
</dbReference>
<dbReference type="NCBIfam" id="NF003001">
    <property type="entry name" value="PRK03784.1"/>
    <property type="match status" value="1"/>
</dbReference>
<dbReference type="PANTHER" id="PTHR30472">
    <property type="entry name" value="FERRIC ENTEROBACTIN TRANSPORT SYSTEM PERMEASE PROTEIN"/>
    <property type="match status" value="1"/>
</dbReference>
<dbReference type="PANTHER" id="PTHR30472:SF29">
    <property type="entry name" value="VITAMIN B12 IMPORT SYSTEM PERMEASE PROTEIN BTUC"/>
    <property type="match status" value="1"/>
</dbReference>
<dbReference type="Pfam" id="PF01032">
    <property type="entry name" value="FecCD"/>
    <property type="match status" value="1"/>
</dbReference>
<dbReference type="SUPFAM" id="SSF81345">
    <property type="entry name" value="ABC transporter involved in vitamin B12 uptake, BtuC"/>
    <property type="match status" value="1"/>
</dbReference>
<feature type="chain" id="PRO_0000059978" description="Vitamin B12 import system permease protein BtuC">
    <location>
        <begin position="1"/>
        <end position="326"/>
    </location>
</feature>
<feature type="transmembrane region" description="Helical" evidence="1">
    <location>
        <begin position="13"/>
        <end position="35"/>
    </location>
</feature>
<feature type="transmembrane region" description="Helical" evidence="1">
    <location>
        <begin position="55"/>
        <end position="77"/>
    </location>
</feature>
<feature type="transmembrane region" description="Helical" evidence="1">
    <location>
        <begin position="90"/>
        <end position="107"/>
    </location>
</feature>
<feature type="transmembrane region" description="Helical" evidence="1">
    <location>
        <begin position="111"/>
        <end position="133"/>
    </location>
</feature>
<feature type="transmembrane region" description="Helical" evidence="1">
    <location>
        <begin position="146"/>
        <end position="168"/>
    </location>
</feature>
<feature type="transmembrane region" description="Helical" evidence="1">
    <location>
        <begin position="188"/>
        <end position="205"/>
    </location>
</feature>
<feature type="transmembrane region" description="Helical" evidence="1">
    <location>
        <begin position="242"/>
        <end position="264"/>
    </location>
</feature>
<feature type="transmembrane region" description="Helical" evidence="1">
    <location>
        <begin position="274"/>
        <end position="296"/>
    </location>
</feature>
<feature type="transmembrane region" description="Helical" evidence="1">
    <location>
        <begin position="303"/>
        <end position="322"/>
    </location>
</feature>
<gene>
    <name evidence="1" type="primary">btuC</name>
    <name type="ordered locus">SF1520</name>
    <name type="ordered locus">S1637</name>
</gene>
<protein>
    <recommendedName>
        <fullName evidence="1">Vitamin B12 import system permease protein BtuC</fullName>
    </recommendedName>
</protein>
<evidence type="ECO:0000255" key="1">
    <source>
        <dbReference type="HAMAP-Rule" id="MF_01004"/>
    </source>
</evidence>
<proteinExistence type="inferred from homology"/>
<keyword id="KW-0997">Cell inner membrane</keyword>
<keyword id="KW-1003">Cell membrane</keyword>
<keyword id="KW-0472">Membrane</keyword>
<keyword id="KW-1185">Reference proteome</keyword>
<keyword id="KW-0812">Transmembrane</keyword>
<keyword id="KW-1133">Transmembrane helix</keyword>
<keyword id="KW-0813">Transport</keyword>
<name>BTUC_SHIFL</name>
<organism>
    <name type="scientific">Shigella flexneri</name>
    <dbReference type="NCBI Taxonomy" id="623"/>
    <lineage>
        <taxon>Bacteria</taxon>
        <taxon>Pseudomonadati</taxon>
        <taxon>Pseudomonadota</taxon>
        <taxon>Gammaproteobacteria</taxon>
        <taxon>Enterobacterales</taxon>
        <taxon>Enterobacteriaceae</taxon>
        <taxon>Shigella</taxon>
    </lineage>
</organism>
<accession>Q7C1M5</accession>
<accession>Q83RG0</accession>
<comment type="function">
    <text evidence="1">Part of the ABC transporter complex BtuCDF involved in vitamin B12 import. Involved in the translocation of the substrate across the membrane.</text>
</comment>
<comment type="subunit">
    <text evidence="1">The complex is composed of two ATP-binding proteins (BtuD), two transmembrane proteins (BtuC) and a solute-binding protein (BtuF).</text>
</comment>
<comment type="subcellular location">
    <subcellularLocation>
        <location evidence="1">Cell inner membrane</location>
        <topology evidence="1">Multi-pass membrane protein</topology>
    </subcellularLocation>
</comment>
<comment type="similarity">
    <text evidence="1">Belongs to the binding-protein-dependent transport system permease family. FecCD subfamily.</text>
</comment>
<reference key="1">
    <citation type="journal article" date="2002" name="Nucleic Acids Res.">
        <title>Genome sequence of Shigella flexneri 2a: insights into pathogenicity through comparison with genomes of Escherichia coli K12 and O157.</title>
        <authorList>
            <person name="Jin Q."/>
            <person name="Yuan Z."/>
            <person name="Xu J."/>
            <person name="Wang Y."/>
            <person name="Shen Y."/>
            <person name="Lu W."/>
            <person name="Wang J."/>
            <person name="Liu H."/>
            <person name="Yang J."/>
            <person name="Yang F."/>
            <person name="Zhang X."/>
            <person name="Zhang J."/>
            <person name="Yang G."/>
            <person name="Wu H."/>
            <person name="Qu D."/>
            <person name="Dong J."/>
            <person name="Sun L."/>
            <person name="Xue Y."/>
            <person name="Zhao A."/>
            <person name="Gao Y."/>
            <person name="Zhu J."/>
            <person name="Kan B."/>
            <person name="Ding K."/>
            <person name="Chen S."/>
            <person name="Cheng H."/>
            <person name="Yao Z."/>
            <person name="He B."/>
            <person name="Chen R."/>
            <person name="Ma D."/>
            <person name="Qiang B."/>
            <person name="Wen Y."/>
            <person name="Hou Y."/>
            <person name="Yu J."/>
        </authorList>
    </citation>
    <scope>NUCLEOTIDE SEQUENCE [LARGE SCALE GENOMIC DNA]</scope>
    <source>
        <strain>301 / Serotype 2a</strain>
    </source>
</reference>
<reference key="2">
    <citation type="journal article" date="2003" name="Infect. Immun.">
        <title>Complete genome sequence and comparative genomics of Shigella flexneri serotype 2a strain 2457T.</title>
        <authorList>
            <person name="Wei J."/>
            <person name="Goldberg M.B."/>
            <person name="Burland V."/>
            <person name="Venkatesan M.M."/>
            <person name="Deng W."/>
            <person name="Fournier G."/>
            <person name="Mayhew G.F."/>
            <person name="Plunkett G. III"/>
            <person name="Rose D.J."/>
            <person name="Darling A."/>
            <person name="Mau B."/>
            <person name="Perna N.T."/>
            <person name="Payne S.M."/>
            <person name="Runyen-Janecky L.J."/>
            <person name="Zhou S."/>
            <person name="Schwartz D.C."/>
            <person name="Blattner F.R."/>
        </authorList>
    </citation>
    <scope>NUCLEOTIDE SEQUENCE [LARGE SCALE GENOMIC DNA]</scope>
    <source>
        <strain>ATCC 700930 / 2457T / Serotype 2a</strain>
    </source>
</reference>